<gene>
    <name type="ordered locus">YPK_1392</name>
</gene>
<accession>B1JSJ5</accession>
<name>Y1392_YERPY</name>
<sequence length="152" mass="17097">MQIWVDADACPNVIKEVLFRAADRTGMMVTLVANQPLKTPPSKFIRTVQVASGFDVADNEIVQRVEKNDLVITADIPLAAEVIEKGGIALNPRGERYTPDTIRERLNMRDFMDTMRASGIQTGGPNTLNQRDRQQFANELDKWLQQARNQAK</sequence>
<organism>
    <name type="scientific">Yersinia pseudotuberculosis serotype O:3 (strain YPIII)</name>
    <dbReference type="NCBI Taxonomy" id="502800"/>
    <lineage>
        <taxon>Bacteria</taxon>
        <taxon>Pseudomonadati</taxon>
        <taxon>Pseudomonadota</taxon>
        <taxon>Gammaproteobacteria</taxon>
        <taxon>Enterobacterales</taxon>
        <taxon>Yersiniaceae</taxon>
        <taxon>Yersinia</taxon>
    </lineage>
</organism>
<dbReference type="EMBL" id="CP000950">
    <property type="protein sequence ID" value="ACA67686.1"/>
    <property type="molecule type" value="Genomic_DNA"/>
</dbReference>
<dbReference type="RefSeq" id="WP_002208527.1">
    <property type="nucleotide sequence ID" value="NZ_CP009792.1"/>
</dbReference>
<dbReference type="KEGG" id="ypy:YPK_1392"/>
<dbReference type="PATRIC" id="fig|502800.11.peg.2029"/>
<dbReference type="CDD" id="cd18720">
    <property type="entry name" value="PIN_YqxD-like"/>
    <property type="match status" value="1"/>
</dbReference>
<dbReference type="HAMAP" id="MF_00489">
    <property type="entry name" value="UPF0178"/>
    <property type="match status" value="1"/>
</dbReference>
<dbReference type="InterPro" id="IPR003791">
    <property type="entry name" value="UPF0178"/>
</dbReference>
<dbReference type="NCBIfam" id="NF001095">
    <property type="entry name" value="PRK00124.1"/>
    <property type="match status" value="1"/>
</dbReference>
<dbReference type="PANTHER" id="PTHR35146">
    <property type="entry name" value="UPF0178 PROTEIN YAII"/>
    <property type="match status" value="1"/>
</dbReference>
<dbReference type="PANTHER" id="PTHR35146:SF1">
    <property type="entry name" value="UPF0178 PROTEIN YAII"/>
    <property type="match status" value="1"/>
</dbReference>
<dbReference type="Pfam" id="PF02639">
    <property type="entry name" value="DUF188"/>
    <property type="match status" value="1"/>
</dbReference>
<feature type="chain" id="PRO_1000126221" description="UPF0178 protein YPK_1392">
    <location>
        <begin position="1"/>
        <end position="152"/>
    </location>
</feature>
<evidence type="ECO:0000255" key="1">
    <source>
        <dbReference type="HAMAP-Rule" id="MF_00489"/>
    </source>
</evidence>
<comment type="similarity">
    <text evidence="1">Belongs to the UPF0178 family.</text>
</comment>
<protein>
    <recommendedName>
        <fullName evidence="1">UPF0178 protein YPK_1392</fullName>
    </recommendedName>
</protein>
<proteinExistence type="inferred from homology"/>
<reference key="1">
    <citation type="submission" date="2008-02" db="EMBL/GenBank/DDBJ databases">
        <title>Complete sequence of Yersinia pseudotuberculosis YPIII.</title>
        <authorList>
            <consortium name="US DOE Joint Genome Institute"/>
            <person name="Copeland A."/>
            <person name="Lucas S."/>
            <person name="Lapidus A."/>
            <person name="Glavina del Rio T."/>
            <person name="Dalin E."/>
            <person name="Tice H."/>
            <person name="Bruce D."/>
            <person name="Goodwin L."/>
            <person name="Pitluck S."/>
            <person name="Munk A.C."/>
            <person name="Brettin T."/>
            <person name="Detter J.C."/>
            <person name="Han C."/>
            <person name="Tapia R."/>
            <person name="Schmutz J."/>
            <person name="Larimer F."/>
            <person name="Land M."/>
            <person name="Hauser L."/>
            <person name="Challacombe J.F."/>
            <person name="Green L."/>
            <person name="Lindler L.E."/>
            <person name="Nikolich M.P."/>
            <person name="Richardson P."/>
        </authorList>
    </citation>
    <scope>NUCLEOTIDE SEQUENCE [LARGE SCALE GENOMIC DNA]</scope>
    <source>
        <strain>YPIII</strain>
    </source>
</reference>